<keyword id="KW-0963">Cytoplasm</keyword>
<keyword id="KW-0324">Glycolysis</keyword>
<keyword id="KW-0456">Lyase</keyword>
<keyword id="KW-0460">Magnesium</keyword>
<keyword id="KW-0479">Metal-binding</keyword>
<keyword id="KW-0964">Secreted</keyword>
<gene>
    <name evidence="1" type="primary">eno</name>
    <name type="ordered locus">PH1942</name>
</gene>
<feature type="chain" id="PRO_0000134032" description="Enolase">
    <location>
        <begin position="1"/>
        <end position="428"/>
    </location>
</feature>
<feature type="active site" description="Proton donor" evidence="1">
    <location>
        <position position="208"/>
    </location>
</feature>
<feature type="active site" description="Proton acceptor" evidence="1">
    <location>
        <position position="338"/>
    </location>
</feature>
<feature type="binding site" evidence="1">
    <location>
        <position position="164"/>
    </location>
    <ligand>
        <name>(2R)-2-phosphoglycerate</name>
        <dbReference type="ChEBI" id="CHEBI:58289"/>
    </ligand>
</feature>
<feature type="binding site" evidence="1">
    <location>
        <position position="245"/>
    </location>
    <ligand>
        <name>Mg(2+)</name>
        <dbReference type="ChEBI" id="CHEBI:18420"/>
    </ligand>
</feature>
<feature type="binding site" evidence="1">
    <location>
        <position position="286"/>
    </location>
    <ligand>
        <name>Mg(2+)</name>
        <dbReference type="ChEBI" id="CHEBI:18420"/>
    </ligand>
</feature>
<feature type="binding site" evidence="1">
    <location>
        <position position="313"/>
    </location>
    <ligand>
        <name>Mg(2+)</name>
        <dbReference type="ChEBI" id="CHEBI:18420"/>
    </ligand>
</feature>
<feature type="binding site" evidence="1">
    <location>
        <position position="338"/>
    </location>
    <ligand>
        <name>(2R)-2-phosphoglycerate</name>
        <dbReference type="ChEBI" id="CHEBI:58289"/>
    </ligand>
</feature>
<feature type="binding site" evidence="1">
    <location>
        <position position="367"/>
    </location>
    <ligand>
        <name>(2R)-2-phosphoglycerate</name>
        <dbReference type="ChEBI" id="CHEBI:58289"/>
    </ligand>
</feature>
<feature type="binding site" evidence="1">
    <location>
        <position position="368"/>
    </location>
    <ligand>
        <name>(2R)-2-phosphoglycerate</name>
        <dbReference type="ChEBI" id="CHEBI:58289"/>
    </ligand>
</feature>
<feature type="binding site" evidence="1">
    <location>
        <position position="389"/>
    </location>
    <ligand>
        <name>(2R)-2-phosphoglycerate</name>
        <dbReference type="ChEBI" id="CHEBI:58289"/>
    </ligand>
</feature>
<comment type="function">
    <text evidence="1">Catalyzes the reversible conversion of 2-phosphoglycerate (2-PG) into phosphoenolpyruvate (PEP). It is essential for the degradation of carbohydrates via glycolysis.</text>
</comment>
<comment type="catalytic activity">
    <reaction evidence="1">
        <text>(2R)-2-phosphoglycerate = phosphoenolpyruvate + H2O</text>
        <dbReference type="Rhea" id="RHEA:10164"/>
        <dbReference type="ChEBI" id="CHEBI:15377"/>
        <dbReference type="ChEBI" id="CHEBI:58289"/>
        <dbReference type="ChEBI" id="CHEBI:58702"/>
        <dbReference type="EC" id="4.2.1.11"/>
    </reaction>
</comment>
<comment type="cofactor">
    <cofactor evidence="1">
        <name>Mg(2+)</name>
        <dbReference type="ChEBI" id="CHEBI:18420"/>
    </cofactor>
    <text evidence="1">Binds a second Mg(2+) ion via substrate during catalysis.</text>
</comment>
<comment type="pathway">
    <text evidence="1">Carbohydrate degradation; glycolysis; pyruvate from D-glyceraldehyde 3-phosphate: step 4/5.</text>
</comment>
<comment type="subcellular location">
    <subcellularLocation>
        <location evidence="1">Cytoplasm</location>
    </subcellularLocation>
    <subcellularLocation>
        <location evidence="1">Secreted</location>
    </subcellularLocation>
    <subcellularLocation>
        <location evidence="1">Cell surface</location>
    </subcellularLocation>
    <text evidence="1">Fractions of enolase are present in both the cytoplasm and on the cell surface.</text>
</comment>
<comment type="similarity">
    <text evidence="1">Belongs to the enolase family.</text>
</comment>
<proteinExistence type="inferred from homology"/>
<reference key="1">
    <citation type="journal article" date="1998" name="DNA Res.">
        <title>Complete sequence and gene organization of the genome of a hyper-thermophilic archaebacterium, Pyrococcus horikoshii OT3.</title>
        <authorList>
            <person name="Kawarabayasi Y."/>
            <person name="Sawada M."/>
            <person name="Horikawa H."/>
            <person name="Haikawa Y."/>
            <person name="Hino Y."/>
            <person name="Yamamoto S."/>
            <person name="Sekine M."/>
            <person name="Baba S."/>
            <person name="Kosugi H."/>
            <person name="Hosoyama A."/>
            <person name="Nagai Y."/>
            <person name="Sakai M."/>
            <person name="Ogura K."/>
            <person name="Otsuka R."/>
            <person name="Nakazawa H."/>
            <person name="Takamiya M."/>
            <person name="Ohfuku Y."/>
            <person name="Funahashi T."/>
            <person name="Tanaka T."/>
            <person name="Kudoh Y."/>
            <person name="Yamazaki J."/>
            <person name="Kushida N."/>
            <person name="Oguchi A."/>
            <person name="Aoki K."/>
            <person name="Yoshizawa T."/>
            <person name="Nakamura Y."/>
            <person name="Robb F.T."/>
            <person name="Horikoshi K."/>
            <person name="Masuchi Y."/>
            <person name="Shizuya H."/>
            <person name="Kikuchi H."/>
        </authorList>
    </citation>
    <scope>NUCLEOTIDE SEQUENCE [LARGE SCALE GENOMIC DNA]</scope>
    <source>
        <strain>ATCC 700860 / DSM 12428 / JCM 9974 / NBRC 100139 / OT-3</strain>
    </source>
</reference>
<sequence length="428" mass="46697">MENPYEITAIVAREILDSRGNPTVEVDVHTPIAMGRAAVPSGASTGTHEAVELRDGGKRYHGKGVRRAVENVNKIIAPELIGMDVRWQREIDKLLIELDGTENKSNLGANAILAVSLAVAKAAANSLELPLYQYLGGVNAYVLPVPLSNVINGGVHAGNELDFQEFMIMPIGASSFREAIRWVSETYHVLKRVIMGKYGKNAVNVGDEGGFAPPMKEVTEPLDALIKAIEEAGYKPGDEIALAIDAASSEFFKDGKYIVGGKEYTREELLDLYKELVSTYPIVSIEDPFHEEDWEGFVMITNELGKKIQIVGDDLFVTNPRRLKKGIELGAANALLLKVNQIGTLTEAMDAAYTAFRAGYSVIVSHRSGETEDTTIADLAVALNAGQIKTGAPARSDRNAKYNQLIRIEEELEGIAVYAGKNFRKVFF</sequence>
<accession>O59605</accession>
<organism>
    <name type="scientific">Pyrococcus horikoshii (strain ATCC 700860 / DSM 12428 / JCM 9974 / NBRC 100139 / OT-3)</name>
    <dbReference type="NCBI Taxonomy" id="70601"/>
    <lineage>
        <taxon>Archaea</taxon>
        <taxon>Methanobacteriati</taxon>
        <taxon>Methanobacteriota</taxon>
        <taxon>Thermococci</taxon>
        <taxon>Thermococcales</taxon>
        <taxon>Thermococcaceae</taxon>
        <taxon>Pyrococcus</taxon>
    </lineage>
</organism>
<dbReference type="EC" id="4.2.1.11" evidence="1"/>
<dbReference type="EMBL" id="BA000001">
    <property type="protein sequence ID" value="BAA31069.1"/>
    <property type="molecule type" value="Genomic_DNA"/>
</dbReference>
<dbReference type="PIR" id="F71209">
    <property type="entry name" value="F71209"/>
</dbReference>
<dbReference type="RefSeq" id="WP_010886009.1">
    <property type="nucleotide sequence ID" value="NC_000961.1"/>
</dbReference>
<dbReference type="SMR" id="O59605"/>
<dbReference type="STRING" id="70601.gene:9378955"/>
<dbReference type="EnsemblBacteria" id="BAA31069">
    <property type="protein sequence ID" value="BAA31069"/>
    <property type="gene ID" value="BAA31069"/>
</dbReference>
<dbReference type="GeneID" id="1442791"/>
<dbReference type="KEGG" id="pho:PH1942"/>
<dbReference type="eggNOG" id="arCOG01169">
    <property type="taxonomic scope" value="Archaea"/>
</dbReference>
<dbReference type="OrthoDB" id="8680at2157"/>
<dbReference type="UniPathway" id="UPA00109">
    <property type="reaction ID" value="UER00187"/>
</dbReference>
<dbReference type="Proteomes" id="UP000000752">
    <property type="component" value="Chromosome"/>
</dbReference>
<dbReference type="GO" id="GO:0009986">
    <property type="term" value="C:cell surface"/>
    <property type="evidence" value="ECO:0007669"/>
    <property type="project" value="UniProtKB-SubCell"/>
</dbReference>
<dbReference type="GO" id="GO:0005576">
    <property type="term" value="C:extracellular region"/>
    <property type="evidence" value="ECO:0007669"/>
    <property type="project" value="UniProtKB-SubCell"/>
</dbReference>
<dbReference type="GO" id="GO:0000015">
    <property type="term" value="C:phosphopyruvate hydratase complex"/>
    <property type="evidence" value="ECO:0007669"/>
    <property type="project" value="InterPro"/>
</dbReference>
<dbReference type="GO" id="GO:0000287">
    <property type="term" value="F:magnesium ion binding"/>
    <property type="evidence" value="ECO:0007669"/>
    <property type="project" value="UniProtKB-UniRule"/>
</dbReference>
<dbReference type="GO" id="GO:0004634">
    <property type="term" value="F:phosphopyruvate hydratase activity"/>
    <property type="evidence" value="ECO:0007669"/>
    <property type="project" value="UniProtKB-UniRule"/>
</dbReference>
<dbReference type="GO" id="GO:0006096">
    <property type="term" value="P:glycolytic process"/>
    <property type="evidence" value="ECO:0007669"/>
    <property type="project" value="UniProtKB-UniRule"/>
</dbReference>
<dbReference type="CDD" id="cd03313">
    <property type="entry name" value="enolase"/>
    <property type="match status" value="1"/>
</dbReference>
<dbReference type="FunFam" id="3.30.390.10:FF:000001">
    <property type="entry name" value="Enolase"/>
    <property type="match status" value="1"/>
</dbReference>
<dbReference type="Gene3D" id="3.20.20.120">
    <property type="entry name" value="Enolase-like C-terminal domain"/>
    <property type="match status" value="1"/>
</dbReference>
<dbReference type="Gene3D" id="3.30.390.10">
    <property type="entry name" value="Enolase-like, N-terminal domain"/>
    <property type="match status" value="1"/>
</dbReference>
<dbReference type="HAMAP" id="MF_00318">
    <property type="entry name" value="Enolase"/>
    <property type="match status" value="1"/>
</dbReference>
<dbReference type="InterPro" id="IPR000941">
    <property type="entry name" value="Enolase"/>
</dbReference>
<dbReference type="InterPro" id="IPR036849">
    <property type="entry name" value="Enolase-like_C_sf"/>
</dbReference>
<dbReference type="InterPro" id="IPR029017">
    <property type="entry name" value="Enolase-like_N"/>
</dbReference>
<dbReference type="InterPro" id="IPR020810">
    <property type="entry name" value="Enolase_C"/>
</dbReference>
<dbReference type="InterPro" id="IPR020809">
    <property type="entry name" value="Enolase_CS"/>
</dbReference>
<dbReference type="InterPro" id="IPR020811">
    <property type="entry name" value="Enolase_N"/>
</dbReference>
<dbReference type="NCBIfam" id="TIGR01060">
    <property type="entry name" value="eno"/>
    <property type="match status" value="1"/>
</dbReference>
<dbReference type="PANTHER" id="PTHR11902">
    <property type="entry name" value="ENOLASE"/>
    <property type="match status" value="1"/>
</dbReference>
<dbReference type="PANTHER" id="PTHR11902:SF1">
    <property type="entry name" value="ENOLASE"/>
    <property type="match status" value="1"/>
</dbReference>
<dbReference type="Pfam" id="PF00113">
    <property type="entry name" value="Enolase_C"/>
    <property type="match status" value="1"/>
</dbReference>
<dbReference type="Pfam" id="PF03952">
    <property type="entry name" value="Enolase_N"/>
    <property type="match status" value="1"/>
</dbReference>
<dbReference type="PIRSF" id="PIRSF001400">
    <property type="entry name" value="Enolase"/>
    <property type="match status" value="1"/>
</dbReference>
<dbReference type="PRINTS" id="PR00148">
    <property type="entry name" value="ENOLASE"/>
</dbReference>
<dbReference type="SFLD" id="SFLDF00002">
    <property type="entry name" value="enolase"/>
    <property type="match status" value="1"/>
</dbReference>
<dbReference type="SFLD" id="SFLDG00178">
    <property type="entry name" value="enolase"/>
    <property type="match status" value="1"/>
</dbReference>
<dbReference type="SMART" id="SM01192">
    <property type="entry name" value="Enolase_C"/>
    <property type="match status" value="1"/>
</dbReference>
<dbReference type="SMART" id="SM01193">
    <property type="entry name" value="Enolase_N"/>
    <property type="match status" value="1"/>
</dbReference>
<dbReference type="SUPFAM" id="SSF51604">
    <property type="entry name" value="Enolase C-terminal domain-like"/>
    <property type="match status" value="1"/>
</dbReference>
<dbReference type="SUPFAM" id="SSF54826">
    <property type="entry name" value="Enolase N-terminal domain-like"/>
    <property type="match status" value="1"/>
</dbReference>
<dbReference type="PROSITE" id="PS00164">
    <property type="entry name" value="ENOLASE"/>
    <property type="match status" value="1"/>
</dbReference>
<name>ENO_PYRHO</name>
<protein>
    <recommendedName>
        <fullName evidence="1">Enolase</fullName>
        <ecNumber evidence="1">4.2.1.11</ecNumber>
    </recommendedName>
    <alternativeName>
        <fullName evidence="1">2-phospho-D-glycerate hydro-lyase</fullName>
    </alternativeName>
    <alternativeName>
        <fullName evidence="1">2-phosphoglycerate dehydratase</fullName>
    </alternativeName>
</protein>
<evidence type="ECO:0000255" key="1">
    <source>
        <dbReference type="HAMAP-Rule" id="MF_00318"/>
    </source>
</evidence>